<accession>Q3SYZ2</accession>
<accession>Q0V8M1</accession>
<dbReference type="EC" id="2.7.11.1"/>
<dbReference type="EMBL" id="BT026197">
    <property type="protein sequence ID" value="ABG67036.1"/>
    <property type="molecule type" value="mRNA"/>
</dbReference>
<dbReference type="EMBL" id="BC103321">
    <property type="protein sequence ID" value="AAI03322.1"/>
    <property type="molecule type" value="mRNA"/>
</dbReference>
<dbReference type="RefSeq" id="NP_001029951.1">
    <property type="nucleotide sequence ID" value="NM_001034779.2"/>
</dbReference>
<dbReference type="RefSeq" id="XP_005222977.1">
    <property type="nucleotide sequence ID" value="XM_005222920.3"/>
</dbReference>
<dbReference type="SMR" id="Q3SYZ2"/>
<dbReference type="FunCoup" id="Q3SYZ2">
    <property type="interactions" value="1260"/>
</dbReference>
<dbReference type="STRING" id="9913.ENSBTAP00000021983"/>
<dbReference type="PaxDb" id="9913-ENSBTAP00000021983"/>
<dbReference type="Ensembl" id="ENSBTAT00000021983.5">
    <property type="protein sequence ID" value="ENSBTAP00000021983.3"/>
    <property type="gene ID" value="ENSBTAG00000016532.5"/>
</dbReference>
<dbReference type="GeneID" id="615215"/>
<dbReference type="KEGG" id="bta:615215"/>
<dbReference type="CTD" id="7867"/>
<dbReference type="VEuPathDB" id="HostDB:ENSBTAG00000016532"/>
<dbReference type="VGNC" id="VGNC:31229">
    <property type="gene designation" value="MAPKAPK3"/>
</dbReference>
<dbReference type="eggNOG" id="KOG0604">
    <property type="taxonomic scope" value="Eukaryota"/>
</dbReference>
<dbReference type="GeneTree" id="ENSGT00940000154089"/>
<dbReference type="HOGENOM" id="CLU_000288_63_0_1"/>
<dbReference type="InParanoid" id="Q3SYZ2"/>
<dbReference type="OMA" id="PSPEWDC"/>
<dbReference type="OrthoDB" id="40902at2759"/>
<dbReference type="TreeFam" id="TF312891"/>
<dbReference type="Reactome" id="R-BTA-171007">
    <property type="pathway name" value="p38MAPK events"/>
</dbReference>
<dbReference type="Reactome" id="R-BTA-2559580">
    <property type="pathway name" value="Oxidative Stress Induced Senescence"/>
</dbReference>
<dbReference type="Reactome" id="R-BTA-4420097">
    <property type="pathway name" value="VEGFA-VEGFR2 Pathway"/>
</dbReference>
<dbReference type="Reactome" id="R-BTA-450302">
    <property type="pathway name" value="activated TAK1 mediates p38 MAPK activation"/>
</dbReference>
<dbReference type="Proteomes" id="UP000009136">
    <property type="component" value="Chromosome 22"/>
</dbReference>
<dbReference type="Bgee" id="ENSBTAG00000016532">
    <property type="expression patterns" value="Expressed in cardiac ventricle and 104 other cell types or tissues"/>
</dbReference>
<dbReference type="GO" id="GO:0005737">
    <property type="term" value="C:cytoplasm"/>
    <property type="evidence" value="ECO:0000318"/>
    <property type="project" value="GO_Central"/>
</dbReference>
<dbReference type="GO" id="GO:0005654">
    <property type="term" value="C:nucleoplasm"/>
    <property type="evidence" value="ECO:0007669"/>
    <property type="project" value="Ensembl"/>
</dbReference>
<dbReference type="GO" id="GO:0005634">
    <property type="term" value="C:nucleus"/>
    <property type="evidence" value="ECO:0000318"/>
    <property type="project" value="GO_Central"/>
</dbReference>
<dbReference type="GO" id="GO:0005524">
    <property type="term" value="F:ATP binding"/>
    <property type="evidence" value="ECO:0007669"/>
    <property type="project" value="UniProtKB-KW"/>
</dbReference>
<dbReference type="GO" id="GO:0009931">
    <property type="term" value="F:calcium-dependent protein serine/threonine kinase activity"/>
    <property type="evidence" value="ECO:0000318"/>
    <property type="project" value="GO_Central"/>
</dbReference>
<dbReference type="GO" id="GO:0004683">
    <property type="term" value="F:calcium/calmodulin-dependent protein kinase activity"/>
    <property type="evidence" value="ECO:0000318"/>
    <property type="project" value="GO_Central"/>
</dbReference>
<dbReference type="GO" id="GO:0005516">
    <property type="term" value="F:calmodulin binding"/>
    <property type="evidence" value="ECO:0000318"/>
    <property type="project" value="GO_Central"/>
</dbReference>
<dbReference type="GO" id="GO:0051019">
    <property type="term" value="F:mitogen-activated protein kinase binding"/>
    <property type="evidence" value="ECO:0000318"/>
    <property type="project" value="GO_Central"/>
</dbReference>
<dbReference type="GO" id="GO:0106310">
    <property type="term" value="F:protein serine kinase activity"/>
    <property type="evidence" value="ECO:0007669"/>
    <property type="project" value="RHEA"/>
</dbReference>
<dbReference type="GO" id="GO:0004674">
    <property type="term" value="F:protein serine/threonine kinase activity"/>
    <property type="evidence" value="ECO:0000250"/>
    <property type="project" value="UniProtKB"/>
</dbReference>
<dbReference type="GO" id="GO:0035556">
    <property type="term" value="P:intracellular signal transduction"/>
    <property type="evidence" value="ECO:0000318"/>
    <property type="project" value="GO_Central"/>
</dbReference>
<dbReference type="GO" id="GO:0044351">
    <property type="term" value="P:macropinocytosis"/>
    <property type="evidence" value="ECO:0000250"/>
    <property type="project" value="UniProtKB"/>
</dbReference>
<dbReference type="GO" id="GO:0034097">
    <property type="term" value="P:response to cytokine"/>
    <property type="evidence" value="ECO:0000250"/>
    <property type="project" value="UniProtKB"/>
</dbReference>
<dbReference type="GO" id="GO:0032496">
    <property type="term" value="P:response to lipopolysaccharide"/>
    <property type="evidence" value="ECO:0000250"/>
    <property type="project" value="UniProtKB"/>
</dbReference>
<dbReference type="GO" id="GO:0002224">
    <property type="term" value="P:toll-like receptor signaling pathway"/>
    <property type="evidence" value="ECO:0000250"/>
    <property type="project" value="UniProtKB"/>
</dbReference>
<dbReference type="CDD" id="cd14172">
    <property type="entry name" value="STKc_MAPKAPK3"/>
    <property type="match status" value="1"/>
</dbReference>
<dbReference type="FunFam" id="1.10.510.10:FF:000094">
    <property type="entry name" value="MAP kinase-activated protein kinase 2"/>
    <property type="match status" value="1"/>
</dbReference>
<dbReference type="FunFam" id="3.30.200.20:FF:000156">
    <property type="entry name" value="MAP kinase-activated protein kinase 3"/>
    <property type="match status" value="1"/>
</dbReference>
<dbReference type="FunFam" id="4.10.1170.10:FF:000001">
    <property type="entry name" value="MAP kinase-activated protein kinase 3"/>
    <property type="match status" value="1"/>
</dbReference>
<dbReference type="Gene3D" id="4.10.1170.10">
    <property type="entry name" value="MAP kinase activated protein kinase 2"/>
    <property type="match status" value="1"/>
</dbReference>
<dbReference type="Gene3D" id="3.30.200.20">
    <property type="entry name" value="Phosphorylase Kinase, domain 1"/>
    <property type="match status" value="1"/>
</dbReference>
<dbReference type="Gene3D" id="1.10.510.10">
    <property type="entry name" value="Transferase(Phosphotransferase) domain 1"/>
    <property type="match status" value="1"/>
</dbReference>
<dbReference type="InterPro" id="IPR011009">
    <property type="entry name" value="Kinase-like_dom_sf"/>
</dbReference>
<dbReference type="InterPro" id="IPR027442">
    <property type="entry name" value="MAPKAPK_C"/>
</dbReference>
<dbReference type="InterPro" id="IPR000719">
    <property type="entry name" value="Prot_kinase_dom"/>
</dbReference>
<dbReference type="InterPro" id="IPR017441">
    <property type="entry name" value="Protein_kinase_ATP_BS"/>
</dbReference>
<dbReference type="InterPro" id="IPR008271">
    <property type="entry name" value="Ser/Thr_kinase_AS"/>
</dbReference>
<dbReference type="PANTHER" id="PTHR24347">
    <property type="entry name" value="SERINE/THREONINE-PROTEIN KINASE"/>
    <property type="match status" value="1"/>
</dbReference>
<dbReference type="Pfam" id="PF00069">
    <property type="entry name" value="Pkinase"/>
    <property type="match status" value="1"/>
</dbReference>
<dbReference type="SMART" id="SM00220">
    <property type="entry name" value="S_TKc"/>
    <property type="match status" value="1"/>
</dbReference>
<dbReference type="SUPFAM" id="SSF56112">
    <property type="entry name" value="Protein kinase-like (PK-like)"/>
    <property type="match status" value="1"/>
</dbReference>
<dbReference type="PROSITE" id="PS00107">
    <property type="entry name" value="PROTEIN_KINASE_ATP"/>
    <property type="match status" value="1"/>
</dbReference>
<dbReference type="PROSITE" id="PS50011">
    <property type="entry name" value="PROTEIN_KINASE_DOM"/>
    <property type="match status" value="1"/>
</dbReference>
<dbReference type="PROSITE" id="PS00108">
    <property type="entry name" value="PROTEIN_KINASE_ST"/>
    <property type="match status" value="1"/>
</dbReference>
<feature type="chain" id="PRO_0000086292" description="MAP kinase-activated protein kinase 3">
    <location>
        <begin position="1"/>
        <end position="384"/>
    </location>
</feature>
<feature type="domain" description="Protein kinase" evidence="4">
    <location>
        <begin position="46"/>
        <end position="306"/>
    </location>
</feature>
<feature type="region of interest" description="Disordered" evidence="6">
    <location>
        <begin position="1"/>
        <end position="22"/>
    </location>
</feature>
<feature type="region of interest" description="Autoinhibitory helix" evidence="1">
    <location>
        <begin position="309"/>
        <end position="345"/>
    </location>
</feature>
<feature type="region of interest" description="p38 MAPK-binding site" evidence="1">
    <location>
        <begin position="347"/>
        <end position="371"/>
    </location>
</feature>
<feature type="region of interest" description="Disordered" evidence="6">
    <location>
        <begin position="359"/>
        <end position="384"/>
    </location>
</feature>
<feature type="short sequence motif" description="Nuclear export signal (NES)" evidence="1">
    <location>
        <begin position="337"/>
        <end position="346"/>
    </location>
</feature>
<feature type="short sequence motif" description="Bipartite nuclear localization signal 1" evidence="1">
    <location>
        <begin position="352"/>
        <end position="355"/>
    </location>
</feature>
<feature type="short sequence motif" description="Bipartite nuclear localization signal 2" evidence="1">
    <location>
        <begin position="366"/>
        <end position="370"/>
    </location>
</feature>
<feature type="compositionally biased region" description="Low complexity" evidence="6">
    <location>
        <begin position="373"/>
        <end position="384"/>
    </location>
</feature>
<feature type="active site" description="Proton acceptor" evidence="4 5">
    <location>
        <position position="168"/>
    </location>
</feature>
<feature type="binding site" evidence="4">
    <location>
        <begin position="52"/>
        <end position="60"/>
    </location>
    <ligand>
        <name>ATP</name>
        <dbReference type="ChEBI" id="CHEBI:30616"/>
    </ligand>
</feature>
<feature type="binding site" evidence="4">
    <location>
        <position position="75"/>
    </location>
    <ligand>
        <name>ATP</name>
        <dbReference type="ChEBI" id="CHEBI:30616"/>
    </ligand>
</feature>
<feature type="modified residue" description="N-acetylmethionine" evidence="2">
    <location>
        <position position="1"/>
    </location>
</feature>
<feature type="modified residue" description="Phosphothreonine; by MAPK14" evidence="3">
    <location>
        <position position="203"/>
    </location>
</feature>
<feature type="modified residue" description="Phosphoserine; by MAPK14" evidence="1">
    <location>
        <position position="253"/>
    </location>
</feature>
<feature type="modified residue" description="Phosphoserine; by autocatalysis" evidence="1">
    <location>
        <position position="309"/>
    </location>
</feature>
<feature type="modified residue" description="Phosphothreonine; by MAPK14" evidence="1">
    <location>
        <position position="315"/>
    </location>
</feature>
<sequence length="384" mass="43316">MDVETAEEQGGPAPPSGVPCGPCSAGAPALGGRREPKKYAVTDDYQLSKQVLGLGVNGKVLECFHRRTGQKCALKLLYDSPKARQEVDHHWQASGGPHIVRILDVYENMHHSKRCLLIIMECMEGGELFSRIQERGDQAFTEREAAEIMRDIGTAIQFLHSRNIAHRDVKPENLLYTSKDKDAVLKLTDFGFAKETTQNALQTPCYTPYYVAPEVLGPEKYDKSCDMWSLGVIMYILLCGFPPFYSNTGQAISPGMKRRIRLGQYGFPSPEWSEVSEDAKQLIRLLLKTDPTERLTITQFMNHPWINQSMVVPQTPLHTARVLQEDRDHWDEVKEEMTSALATMRVDYDQVKIKDLKTSNNRLLNKRRKKQAGSSSGSQGCNNQ</sequence>
<name>MAPK3_BOVIN</name>
<protein>
    <recommendedName>
        <fullName>MAP kinase-activated protein kinase 3</fullName>
        <shortName>MAPK-activated protein kinase 3</shortName>
        <shortName>MAPKAP kinase 3</shortName>
        <shortName>MAPKAP-K3</shortName>
        <shortName>MAPKAPK-3</shortName>
        <shortName>MK-3</shortName>
        <ecNumber>2.7.11.1</ecNumber>
    </recommendedName>
</protein>
<keyword id="KW-0007">Acetylation</keyword>
<keyword id="KW-0067">ATP-binding</keyword>
<keyword id="KW-0963">Cytoplasm</keyword>
<keyword id="KW-0418">Kinase</keyword>
<keyword id="KW-0547">Nucleotide-binding</keyword>
<keyword id="KW-0539">Nucleus</keyword>
<keyword id="KW-0597">Phosphoprotein</keyword>
<keyword id="KW-1185">Reference proteome</keyword>
<keyword id="KW-0723">Serine/threonine-protein kinase</keyword>
<keyword id="KW-0808">Transferase</keyword>
<gene>
    <name type="primary">MAPKAPK3</name>
</gene>
<comment type="function">
    <text evidence="1">Stress-activated serine/threonine-protein kinase involved in cytokines production, endocytosis, cell migration, chromatin remodeling and transcriptional regulation. Following stress, it is phosphorylated and activated by MAP kinase p38-alpha/MAPK14, leading to phosphorylation of substrates. Phosphorylates serine in the peptide sequence, Hyd-X-R-X(2)-S, where Hyd is a large hydrophobic residue. MAPKAPK2 and MAPKAPK3, share the same function and substrate specificity, but MAPKAPK3 kinase activity and level in protein expression are lower compared to MAPKAPK2. Phosphorylates HSP27/HSPB1, KRT18, KRT20, RCSD1, RPS6KA3, TAB3 and TTP/ZFP36. Mediates phosphorylation of HSP27/HSPB1 in response to stress, leading to dissociate HSP27/HSPB1 from large small heat-shock protein (sHsps) oligomers and impair their chaperone activities and ability to protect against oxidative stress effectively. Involved in inflammatory response by regulating tumor necrosis factor (TNF) and IL6 production post-transcriptionally: acts by phosphorylating AU-rich elements (AREs)-binding proteins, such as TTP/ZFP36, leading to regulate the stability and translation of TNF and IL6 mRNAs. Phosphorylation of TTP/ZFP36, a major post-transcriptional regulator of TNF, promotes its binding to 14-3-3 proteins and reduces its ARE mRNA affinity leading to inhibition of dependent degradation of ARE-containing transcript. Involved in toll-like receptor signaling pathway (TLR) in dendritic cells: required for acute TLR-induced macropinocytosis by phosphorylating and activating RPS6KA3. Also acts as a modulator of Polycomb-mediated repression (By similarity).</text>
</comment>
<comment type="catalytic activity">
    <reaction>
        <text>L-seryl-[protein] + ATP = O-phospho-L-seryl-[protein] + ADP + H(+)</text>
        <dbReference type="Rhea" id="RHEA:17989"/>
        <dbReference type="Rhea" id="RHEA-COMP:9863"/>
        <dbReference type="Rhea" id="RHEA-COMP:11604"/>
        <dbReference type="ChEBI" id="CHEBI:15378"/>
        <dbReference type="ChEBI" id="CHEBI:29999"/>
        <dbReference type="ChEBI" id="CHEBI:30616"/>
        <dbReference type="ChEBI" id="CHEBI:83421"/>
        <dbReference type="ChEBI" id="CHEBI:456216"/>
        <dbReference type="EC" id="2.7.11.1"/>
    </reaction>
</comment>
<comment type="catalytic activity">
    <reaction>
        <text>L-threonyl-[protein] + ATP = O-phospho-L-threonyl-[protein] + ADP + H(+)</text>
        <dbReference type="Rhea" id="RHEA:46608"/>
        <dbReference type="Rhea" id="RHEA-COMP:11060"/>
        <dbReference type="Rhea" id="RHEA-COMP:11605"/>
        <dbReference type="ChEBI" id="CHEBI:15378"/>
        <dbReference type="ChEBI" id="CHEBI:30013"/>
        <dbReference type="ChEBI" id="CHEBI:30616"/>
        <dbReference type="ChEBI" id="CHEBI:61977"/>
        <dbReference type="ChEBI" id="CHEBI:456216"/>
        <dbReference type="EC" id="2.7.11.1"/>
    </reaction>
</comment>
<comment type="activity regulation">
    <text evidence="1">Activated following phosphorylation by p38-alpha/MAPK14 following various stresses. Inhibited by ligand 5B (2'-[2-(1,3-benzodioxol-5-yl)pyrimidin-4-yl]-5',6'-dihydrospiro[piperidine-4,7'-pyrrolo[3,2-c]pyridin]- 4'(1'h)-one) and ligand P4O (2-[2-(2-fluorophenyl)pyridin-4-yl]-1,5,6,7-tetrahydro- 4h-pyrrolo[3,2-c]pyridin-4-one), 2 ATP-competitive inhibitors (By similarity).</text>
</comment>
<comment type="subunit">
    <text evidence="1">Heterodimer with p38-alpha/MAPK14. The heterodimer with p38-alpha/MAPK14 forms a stable complex: molecules are positioned 'face to face' so that the ATP-binding sites of both kinases are at the heterodimer interface. Interacts with TCF3 and with polycomb proteins, such as PCH2 and BMI1/PCGF4 (By similarity).</text>
</comment>
<comment type="subcellular location">
    <subcellularLocation>
        <location evidence="1">Nucleus</location>
    </subcellularLocation>
    <subcellularLocation>
        <location evidence="1">Cytoplasm</location>
    </subcellularLocation>
    <text evidence="1">Predominantly located in the nucleus, when activated it translocates to the cytoplasm.</text>
</comment>
<comment type="PTM">
    <text evidence="1">Phosphorylated and activated by MAPK1/ERK2 and MAPK3/ERK1. Phosphorylated and activated by MAP kinase p38-alpha/MAPK14 at Thr-203, Ser-253 and Thr-315.</text>
</comment>
<comment type="similarity">
    <text evidence="7">Belongs to the protein kinase superfamily. CAMK Ser/Thr protein kinase family.</text>
</comment>
<reference key="1">
    <citation type="journal article" date="2005" name="BMC Genomics">
        <title>Characterization of 954 bovine full-CDS cDNA sequences.</title>
        <authorList>
            <person name="Harhay G.P."/>
            <person name="Sonstegard T.S."/>
            <person name="Keele J.W."/>
            <person name="Heaton M.P."/>
            <person name="Clawson M.L."/>
            <person name="Snelling W.M."/>
            <person name="Wiedmann R.T."/>
            <person name="Van Tassell C.P."/>
            <person name="Smith T.P.L."/>
        </authorList>
    </citation>
    <scope>NUCLEOTIDE SEQUENCE [LARGE SCALE MRNA]</scope>
</reference>
<reference key="2">
    <citation type="submission" date="2005-08" db="EMBL/GenBank/DDBJ databases">
        <authorList>
            <consortium name="NIH - Mammalian Gene Collection (MGC) project"/>
        </authorList>
    </citation>
    <scope>NUCLEOTIDE SEQUENCE [LARGE SCALE MRNA]</scope>
    <source>
        <strain>Crossbred X Angus</strain>
        <tissue>Ileum</tissue>
    </source>
</reference>
<evidence type="ECO:0000250" key="1"/>
<evidence type="ECO:0000250" key="2">
    <source>
        <dbReference type="UniProtKB" id="Q16644"/>
    </source>
</evidence>
<evidence type="ECO:0000250" key="3">
    <source>
        <dbReference type="UniProtKB" id="Q3UMW7"/>
    </source>
</evidence>
<evidence type="ECO:0000255" key="4">
    <source>
        <dbReference type="PROSITE-ProRule" id="PRU00159"/>
    </source>
</evidence>
<evidence type="ECO:0000255" key="5">
    <source>
        <dbReference type="PROSITE-ProRule" id="PRU10027"/>
    </source>
</evidence>
<evidence type="ECO:0000256" key="6">
    <source>
        <dbReference type="SAM" id="MobiDB-lite"/>
    </source>
</evidence>
<evidence type="ECO:0000305" key="7"/>
<organism>
    <name type="scientific">Bos taurus</name>
    <name type="common">Bovine</name>
    <dbReference type="NCBI Taxonomy" id="9913"/>
    <lineage>
        <taxon>Eukaryota</taxon>
        <taxon>Metazoa</taxon>
        <taxon>Chordata</taxon>
        <taxon>Craniata</taxon>
        <taxon>Vertebrata</taxon>
        <taxon>Euteleostomi</taxon>
        <taxon>Mammalia</taxon>
        <taxon>Eutheria</taxon>
        <taxon>Laurasiatheria</taxon>
        <taxon>Artiodactyla</taxon>
        <taxon>Ruminantia</taxon>
        <taxon>Pecora</taxon>
        <taxon>Bovidae</taxon>
        <taxon>Bovinae</taxon>
        <taxon>Bos</taxon>
    </lineage>
</organism>
<proteinExistence type="evidence at transcript level"/>